<proteinExistence type="uncertain"/>
<evidence type="ECO:0000305" key="1"/>
<evidence type="ECO:0000305" key="2">
    <source>
    </source>
</evidence>
<feature type="chain" id="PRO_0000299666" description="Putative uncharacterized protein YMR031W-A">
    <location>
        <begin position="1"/>
        <end position="108"/>
    </location>
</feature>
<gene>
    <name type="ordered locus">YMR031W-A</name>
</gene>
<organism>
    <name type="scientific">Saccharomyces cerevisiae (strain ATCC 204508 / S288c)</name>
    <name type="common">Baker's yeast</name>
    <dbReference type="NCBI Taxonomy" id="559292"/>
    <lineage>
        <taxon>Eukaryota</taxon>
        <taxon>Fungi</taxon>
        <taxon>Dikarya</taxon>
        <taxon>Ascomycota</taxon>
        <taxon>Saccharomycotina</taxon>
        <taxon>Saccharomycetes</taxon>
        <taxon>Saccharomycetales</taxon>
        <taxon>Saccharomycetaceae</taxon>
        <taxon>Saccharomyces</taxon>
    </lineage>
</organism>
<reference key="1">
    <citation type="journal article" date="1997" name="Nature">
        <title>The nucleotide sequence of Saccharomyces cerevisiae chromosome XIII.</title>
        <authorList>
            <person name="Bowman S."/>
            <person name="Churcher C.M."/>
            <person name="Badcock K."/>
            <person name="Brown D."/>
            <person name="Chillingworth T."/>
            <person name="Connor R."/>
            <person name="Dedman K."/>
            <person name="Devlin K."/>
            <person name="Gentles S."/>
            <person name="Hamlin N."/>
            <person name="Hunt S."/>
            <person name="Jagels K."/>
            <person name="Lye G."/>
            <person name="Moule S."/>
            <person name="Odell C."/>
            <person name="Pearson D."/>
            <person name="Rajandream M.A."/>
            <person name="Rice P."/>
            <person name="Skelton J."/>
            <person name="Walsh S.V."/>
            <person name="Whitehead S."/>
            <person name="Barrell B.G."/>
        </authorList>
    </citation>
    <scope>NUCLEOTIDE SEQUENCE [LARGE SCALE GENOMIC DNA]</scope>
    <source>
        <strain>ATCC 204508 / S288c</strain>
    </source>
</reference>
<reference key="2">
    <citation type="journal article" date="2014" name="G3 (Bethesda)">
        <title>The reference genome sequence of Saccharomyces cerevisiae: Then and now.</title>
        <authorList>
            <person name="Engel S.R."/>
            <person name="Dietrich F.S."/>
            <person name="Fisk D.G."/>
            <person name="Binkley G."/>
            <person name="Balakrishnan R."/>
            <person name="Costanzo M.C."/>
            <person name="Dwight S.S."/>
            <person name="Hitz B.C."/>
            <person name="Karra K."/>
            <person name="Nash R.S."/>
            <person name="Weng S."/>
            <person name="Wong E.D."/>
            <person name="Lloyd P."/>
            <person name="Skrzypek M.S."/>
            <person name="Miyasato S.R."/>
            <person name="Simison M."/>
            <person name="Cherry J.M."/>
        </authorList>
    </citation>
    <scope>GENOME REANNOTATION</scope>
    <source>
        <strain>ATCC 204508 / S288c</strain>
    </source>
</reference>
<reference key="3">
    <citation type="journal article" date="2007" name="Genome Res.">
        <title>Approaching a complete repository of sequence-verified protein-encoding clones for Saccharomyces cerevisiae.</title>
        <authorList>
            <person name="Hu Y."/>
            <person name="Rolfs A."/>
            <person name="Bhullar B."/>
            <person name="Murthy T.V.S."/>
            <person name="Zhu C."/>
            <person name="Berger M.F."/>
            <person name="Camargo A.A."/>
            <person name="Kelley F."/>
            <person name="McCarron S."/>
            <person name="Jepson D."/>
            <person name="Richardson A."/>
            <person name="Raphael J."/>
            <person name="Moreira D."/>
            <person name="Taycher E."/>
            <person name="Zuo D."/>
            <person name="Mohr S."/>
            <person name="Kane M.F."/>
            <person name="Williamson J."/>
            <person name="Simpson A.J.G."/>
            <person name="Bulyk M.L."/>
            <person name="Harlow E."/>
            <person name="Marsischky G."/>
            <person name="Kolodner R.D."/>
            <person name="LaBaer J."/>
        </authorList>
    </citation>
    <scope>NUCLEOTIDE SEQUENCE [GENOMIC DNA]</scope>
    <source>
        <strain>ATCC 204508 / S288c</strain>
    </source>
</reference>
<dbReference type="EMBL" id="Z49213">
    <property type="status" value="NOT_ANNOTATED_CDS"/>
    <property type="molecule type" value="Genomic_DNA"/>
</dbReference>
<dbReference type="EMBL" id="AY558401">
    <property type="protein sequence ID" value="AAS56727.1"/>
    <property type="molecule type" value="Genomic_DNA"/>
</dbReference>
<dbReference type="MINT" id="Q6Q572"/>
<dbReference type="STRING" id="4932.YMR031W-A"/>
<dbReference type="PaxDb" id="4932-YMR031W-A"/>
<dbReference type="EnsemblFungi" id="YMR031W-A_mRNA">
    <property type="protein sequence ID" value="YMR031W-A"/>
    <property type="gene ID" value="YMR031W-A"/>
</dbReference>
<dbReference type="AGR" id="SGD:S000004634"/>
<dbReference type="SGD" id="S000004634">
    <property type="gene designation" value="YMR031W-A"/>
</dbReference>
<dbReference type="HOGENOM" id="CLU_2198488_0_0_1"/>
<dbReference type="OMA" id="VIVRVHY"/>
<sequence length="108" mass="11879">MSLSSTAEIKDIGYFALVPYMQSYLTTKDCVIVRVHYFASFQSSCQRAEPLGSTELINIGDILQATRSSPHRVAVVLPPLEGAPFGSLRFSSRRAPIAPSGKYYFPFG</sequence>
<name>YM031_YEAST</name>
<protein>
    <recommendedName>
        <fullName>Putative uncharacterized protein YMR031W-A</fullName>
    </recommendedName>
</protein>
<accession>Q6Q572</accession>
<comment type="miscellaneous">
    <text evidence="1">Partially overlaps YMR031C.</text>
</comment>
<comment type="caution">
    <text evidence="2">Product of a dubious gene prediction unlikely to encode a functional protein. Because of that it is not part of the S.cerevisiae S288c complete/reference proteome set.</text>
</comment>